<reference key="1">
    <citation type="journal article" date="2011" name="J. Bacteriol.">
        <title>Comparative genomics of 28 Salmonella enterica isolates: evidence for CRISPR-mediated adaptive sublineage evolution.</title>
        <authorList>
            <person name="Fricke W.F."/>
            <person name="Mammel M.K."/>
            <person name="McDermott P.F."/>
            <person name="Tartera C."/>
            <person name="White D.G."/>
            <person name="Leclerc J.E."/>
            <person name="Ravel J."/>
            <person name="Cebula T.A."/>
        </authorList>
    </citation>
    <scope>NUCLEOTIDE SEQUENCE [LARGE SCALE GENOMIC DNA]</scope>
    <source>
        <strain>CVM19633</strain>
    </source>
</reference>
<sequence length="382" mass="41260">MNLKEKTRALFAEIFGYPATHTIQAPGRVNLIGEHTDYNDGFVLPCAIDYQTVISCAPRDDRTVRVIAADYDNQVDEFSLEAPIVTHDSQQWSNYVRGVVKHLQQRNNAFGGVDMVISGNVPQGAGLSSSASLEVAVGTVFQQLYHLPLDGAQIALNGQEAENQFVGCNCGIMDQLISALGKKDHALLIDCRTLGAKAVSMPKGVAVVIINSNFKRTLVGSEYNTRREQCETGARFFQQPALRDVSLEAFNAVASELDPVVAKRVRHVLSENARTVEAASALEKGDLQRMGQLMAESHASMRDDFEITVPQIDTLVDIVKATIGDQGGVRMTGGGFGGCVVALIPEDLVPAVQQAVAQQYEAKTGIKETFYVCKPSQGAGQC</sequence>
<name>GAL1_SALSV</name>
<gene>
    <name evidence="1" type="primary">galK</name>
    <name type="ordered locus">SeSA_A0924</name>
</gene>
<comment type="function">
    <text evidence="1">Catalyzes the transfer of the gamma-phosphate of ATP to D-galactose to form alpha-D-galactose-1-phosphate (Gal-1-P).</text>
</comment>
<comment type="catalytic activity">
    <reaction evidence="1">
        <text>alpha-D-galactose + ATP = alpha-D-galactose 1-phosphate + ADP + H(+)</text>
        <dbReference type="Rhea" id="RHEA:13553"/>
        <dbReference type="ChEBI" id="CHEBI:15378"/>
        <dbReference type="ChEBI" id="CHEBI:28061"/>
        <dbReference type="ChEBI" id="CHEBI:30616"/>
        <dbReference type="ChEBI" id="CHEBI:58336"/>
        <dbReference type="ChEBI" id="CHEBI:456216"/>
        <dbReference type="EC" id="2.7.1.6"/>
    </reaction>
</comment>
<comment type="pathway">
    <text evidence="1">Carbohydrate metabolism; galactose metabolism.</text>
</comment>
<comment type="subcellular location">
    <subcellularLocation>
        <location evidence="1">Cytoplasm</location>
    </subcellularLocation>
</comment>
<comment type="similarity">
    <text evidence="1">Belongs to the GHMP kinase family. GalK subfamily.</text>
</comment>
<accession>B4TQR9</accession>
<dbReference type="EC" id="2.7.1.6" evidence="1"/>
<dbReference type="EMBL" id="CP001127">
    <property type="protein sequence ID" value="ACF88848.1"/>
    <property type="molecule type" value="Genomic_DNA"/>
</dbReference>
<dbReference type="RefSeq" id="WP_001049372.1">
    <property type="nucleotide sequence ID" value="NC_011094.1"/>
</dbReference>
<dbReference type="SMR" id="B4TQR9"/>
<dbReference type="KEGG" id="sew:SeSA_A0924"/>
<dbReference type="HOGENOM" id="CLU_017814_2_1_6"/>
<dbReference type="UniPathway" id="UPA00214"/>
<dbReference type="Proteomes" id="UP000001865">
    <property type="component" value="Chromosome"/>
</dbReference>
<dbReference type="GO" id="GO:0005829">
    <property type="term" value="C:cytosol"/>
    <property type="evidence" value="ECO:0007669"/>
    <property type="project" value="TreeGrafter"/>
</dbReference>
<dbReference type="GO" id="GO:0005524">
    <property type="term" value="F:ATP binding"/>
    <property type="evidence" value="ECO:0007669"/>
    <property type="project" value="UniProtKB-UniRule"/>
</dbReference>
<dbReference type="GO" id="GO:0004335">
    <property type="term" value="F:galactokinase activity"/>
    <property type="evidence" value="ECO:0007669"/>
    <property type="project" value="UniProtKB-UniRule"/>
</dbReference>
<dbReference type="GO" id="GO:0000287">
    <property type="term" value="F:magnesium ion binding"/>
    <property type="evidence" value="ECO:0007669"/>
    <property type="project" value="UniProtKB-UniRule"/>
</dbReference>
<dbReference type="GO" id="GO:0006012">
    <property type="term" value="P:galactose metabolic process"/>
    <property type="evidence" value="ECO:0007669"/>
    <property type="project" value="UniProtKB-UniRule"/>
</dbReference>
<dbReference type="FunFam" id="3.30.230.10:FF:000017">
    <property type="entry name" value="Galactokinase"/>
    <property type="match status" value="1"/>
</dbReference>
<dbReference type="FunFam" id="3.30.70.890:FF:000001">
    <property type="entry name" value="Galactokinase"/>
    <property type="match status" value="1"/>
</dbReference>
<dbReference type="Gene3D" id="3.30.230.10">
    <property type="match status" value="1"/>
</dbReference>
<dbReference type="Gene3D" id="3.30.70.890">
    <property type="entry name" value="GHMP kinase, C-terminal domain"/>
    <property type="match status" value="1"/>
</dbReference>
<dbReference type="HAMAP" id="MF_00246">
    <property type="entry name" value="Galactokinase"/>
    <property type="match status" value="1"/>
</dbReference>
<dbReference type="InterPro" id="IPR000705">
    <property type="entry name" value="Galactokinase"/>
</dbReference>
<dbReference type="InterPro" id="IPR022963">
    <property type="entry name" value="Galactokinase_bac"/>
</dbReference>
<dbReference type="InterPro" id="IPR019741">
    <property type="entry name" value="Galactokinase_CS"/>
</dbReference>
<dbReference type="InterPro" id="IPR019539">
    <property type="entry name" value="GalKase_N"/>
</dbReference>
<dbReference type="InterPro" id="IPR013750">
    <property type="entry name" value="GHMP_kinase_C_dom"/>
</dbReference>
<dbReference type="InterPro" id="IPR036554">
    <property type="entry name" value="GHMP_kinase_C_sf"/>
</dbReference>
<dbReference type="InterPro" id="IPR006204">
    <property type="entry name" value="GHMP_kinase_N_dom"/>
</dbReference>
<dbReference type="InterPro" id="IPR006203">
    <property type="entry name" value="GHMP_knse_ATP-bd_CS"/>
</dbReference>
<dbReference type="InterPro" id="IPR006206">
    <property type="entry name" value="Mevalonate/galactokinase"/>
</dbReference>
<dbReference type="InterPro" id="IPR020568">
    <property type="entry name" value="Ribosomal_Su5_D2-typ_SF"/>
</dbReference>
<dbReference type="InterPro" id="IPR014721">
    <property type="entry name" value="Ribsml_uS5_D2-typ_fold_subgr"/>
</dbReference>
<dbReference type="NCBIfam" id="TIGR00131">
    <property type="entry name" value="gal_kin"/>
    <property type="match status" value="1"/>
</dbReference>
<dbReference type="NCBIfam" id="NF003472">
    <property type="entry name" value="PRK05101.1"/>
    <property type="match status" value="1"/>
</dbReference>
<dbReference type="PANTHER" id="PTHR10457:SF7">
    <property type="entry name" value="GALACTOKINASE-RELATED"/>
    <property type="match status" value="1"/>
</dbReference>
<dbReference type="PANTHER" id="PTHR10457">
    <property type="entry name" value="MEVALONATE KINASE/GALACTOKINASE"/>
    <property type="match status" value="1"/>
</dbReference>
<dbReference type="Pfam" id="PF10509">
    <property type="entry name" value="GalKase_gal_bdg"/>
    <property type="match status" value="1"/>
</dbReference>
<dbReference type="Pfam" id="PF08544">
    <property type="entry name" value="GHMP_kinases_C"/>
    <property type="match status" value="1"/>
</dbReference>
<dbReference type="Pfam" id="PF00288">
    <property type="entry name" value="GHMP_kinases_N"/>
    <property type="match status" value="1"/>
</dbReference>
<dbReference type="PIRSF" id="PIRSF000530">
    <property type="entry name" value="Galactokinase"/>
    <property type="match status" value="1"/>
</dbReference>
<dbReference type="PRINTS" id="PR00473">
    <property type="entry name" value="GALCTOKINASE"/>
</dbReference>
<dbReference type="PRINTS" id="PR00959">
    <property type="entry name" value="MEVGALKINASE"/>
</dbReference>
<dbReference type="SUPFAM" id="SSF55060">
    <property type="entry name" value="GHMP Kinase, C-terminal domain"/>
    <property type="match status" value="1"/>
</dbReference>
<dbReference type="SUPFAM" id="SSF54211">
    <property type="entry name" value="Ribosomal protein S5 domain 2-like"/>
    <property type="match status" value="1"/>
</dbReference>
<dbReference type="PROSITE" id="PS00106">
    <property type="entry name" value="GALACTOKINASE"/>
    <property type="match status" value="1"/>
</dbReference>
<dbReference type="PROSITE" id="PS00627">
    <property type="entry name" value="GHMP_KINASES_ATP"/>
    <property type="match status" value="1"/>
</dbReference>
<feature type="chain" id="PRO_1000100845" description="Galactokinase">
    <location>
        <begin position="1"/>
        <end position="382"/>
    </location>
</feature>
<feature type="active site" description="Proton acceptor" evidence="1">
    <location>
        <position position="174"/>
    </location>
</feature>
<feature type="binding site" evidence="1">
    <location>
        <begin position="34"/>
        <end position="37"/>
    </location>
    <ligand>
        <name>substrate</name>
    </ligand>
</feature>
<feature type="binding site" evidence="1">
    <location>
        <begin position="124"/>
        <end position="130"/>
    </location>
    <ligand>
        <name>ATP</name>
        <dbReference type="ChEBI" id="CHEBI:30616"/>
    </ligand>
</feature>
<feature type="binding site" evidence="1">
    <location>
        <position position="130"/>
    </location>
    <ligand>
        <name>Mg(2+)</name>
        <dbReference type="ChEBI" id="CHEBI:18420"/>
    </ligand>
</feature>
<feature type="binding site" evidence="1">
    <location>
        <position position="162"/>
    </location>
    <ligand>
        <name>Mg(2+)</name>
        <dbReference type="ChEBI" id="CHEBI:18420"/>
    </ligand>
</feature>
<feature type="binding site" evidence="1">
    <location>
        <position position="223"/>
    </location>
    <ligand>
        <name>substrate</name>
    </ligand>
</feature>
<feature type="site" description="Transition state stabilizer" evidence="1">
    <location>
        <position position="28"/>
    </location>
</feature>
<keyword id="KW-0067">ATP-binding</keyword>
<keyword id="KW-0119">Carbohydrate metabolism</keyword>
<keyword id="KW-0963">Cytoplasm</keyword>
<keyword id="KW-0299">Galactose metabolism</keyword>
<keyword id="KW-0418">Kinase</keyword>
<keyword id="KW-0460">Magnesium</keyword>
<keyword id="KW-0479">Metal-binding</keyword>
<keyword id="KW-0547">Nucleotide-binding</keyword>
<keyword id="KW-0808">Transferase</keyword>
<protein>
    <recommendedName>
        <fullName evidence="1">Galactokinase</fullName>
        <ecNumber evidence="1">2.7.1.6</ecNumber>
    </recommendedName>
    <alternativeName>
        <fullName evidence="1">Galactose kinase</fullName>
    </alternativeName>
</protein>
<evidence type="ECO:0000255" key="1">
    <source>
        <dbReference type="HAMAP-Rule" id="MF_00246"/>
    </source>
</evidence>
<proteinExistence type="inferred from homology"/>
<organism>
    <name type="scientific">Salmonella schwarzengrund (strain CVM19633)</name>
    <dbReference type="NCBI Taxonomy" id="439843"/>
    <lineage>
        <taxon>Bacteria</taxon>
        <taxon>Pseudomonadati</taxon>
        <taxon>Pseudomonadota</taxon>
        <taxon>Gammaproteobacteria</taxon>
        <taxon>Enterobacterales</taxon>
        <taxon>Enterobacteriaceae</taxon>
        <taxon>Salmonella</taxon>
    </lineage>
</organism>